<gene>
    <name evidence="1" type="primary">selA</name>
    <name type="ordered locus">HPP12_1491</name>
</gene>
<sequence length="390" mass="44395">MANITTKETPKITPDLLKNPYQKIINASASVFDEKHGRSFFSPQFYEKIEPYLKEVLTHPIDLECDLNTAKKKNRLTPLKQLFKACFNTEEILIVNNNTSAVFLIANALAQEKEIVVSYGELVGGDFNLKDILLSSGARLHLVGNTSRTYLRDYRLALNENSKMLFKTHNPAFKKDTPFKDLQALAKEHDLIDYYNLGDVDLLDRTALEEVLALKPSLLSFSADKSFNSVQAGIIMGQKEWVETLKNHPLYRALRVDKITLTLLFHSLNAWVNHQEEITIHALLHQTKDALLQKALKLYALLKPLELNVSIASSFSKIGNLFGRELESFCVKIQSKNTRALNGEKLYLRLFQKGVITRISCEFVCFEVFSLNEKDFEKIALVLEEILNKA</sequence>
<name>SELA_HELP2</name>
<dbReference type="EC" id="2.9.1.1" evidence="1"/>
<dbReference type="EMBL" id="CP001217">
    <property type="protein sequence ID" value="ACJ08639.1"/>
    <property type="molecule type" value="Genomic_DNA"/>
</dbReference>
<dbReference type="SMR" id="B6JP11"/>
<dbReference type="KEGG" id="hpp:HPP12_1491"/>
<dbReference type="HOGENOM" id="CLU_038142_1_0_7"/>
<dbReference type="UniPathway" id="UPA00906">
    <property type="reaction ID" value="UER00896"/>
</dbReference>
<dbReference type="Proteomes" id="UP000008198">
    <property type="component" value="Chromosome"/>
</dbReference>
<dbReference type="GO" id="GO:0005737">
    <property type="term" value="C:cytoplasm"/>
    <property type="evidence" value="ECO:0007669"/>
    <property type="project" value="UniProtKB-SubCell"/>
</dbReference>
<dbReference type="GO" id="GO:0004125">
    <property type="term" value="F:L-seryl-tRNA(Sec) selenium transferase activity"/>
    <property type="evidence" value="ECO:0007669"/>
    <property type="project" value="UniProtKB-UniRule"/>
</dbReference>
<dbReference type="GO" id="GO:0001717">
    <property type="term" value="P:conversion of seryl-tRNAsec to selenocys-tRNAsec"/>
    <property type="evidence" value="ECO:0007669"/>
    <property type="project" value="UniProtKB-UniRule"/>
</dbReference>
<dbReference type="GO" id="GO:0001514">
    <property type="term" value="P:selenocysteine incorporation"/>
    <property type="evidence" value="ECO:0007669"/>
    <property type="project" value="UniProtKB-UniRule"/>
</dbReference>
<dbReference type="Gene3D" id="3.90.1150.180">
    <property type="match status" value="1"/>
</dbReference>
<dbReference type="Gene3D" id="3.40.640.10">
    <property type="entry name" value="Type I PLP-dependent aspartate aminotransferase-like (Major domain)"/>
    <property type="match status" value="1"/>
</dbReference>
<dbReference type="HAMAP" id="MF_00423">
    <property type="entry name" value="SelA"/>
    <property type="match status" value="1"/>
</dbReference>
<dbReference type="InterPro" id="IPR015424">
    <property type="entry name" value="PyrdxlP-dep_Trfase"/>
</dbReference>
<dbReference type="InterPro" id="IPR015421">
    <property type="entry name" value="PyrdxlP-dep_Trfase_major"/>
</dbReference>
<dbReference type="InterPro" id="IPR018319">
    <property type="entry name" value="SelA-like"/>
</dbReference>
<dbReference type="InterPro" id="IPR004534">
    <property type="entry name" value="SelA_trans"/>
</dbReference>
<dbReference type="PANTHER" id="PTHR32328">
    <property type="entry name" value="L-SERYL-TRNA(SEC) SELENIUM TRANSFERASE"/>
    <property type="match status" value="1"/>
</dbReference>
<dbReference type="PANTHER" id="PTHR32328:SF0">
    <property type="entry name" value="L-SERYL-TRNA(SEC) SELENIUM TRANSFERASE"/>
    <property type="match status" value="1"/>
</dbReference>
<dbReference type="Pfam" id="PF03841">
    <property type="entry name" value="SelA"/>
    <property type="match status" value="1"/>
</dbReference>
<dbReference type="SUPFAM" id="SSF53383">
    <property type="entry name" value="PLP-dependent transferases"/>
    <property type="match status" value="1"/>
</dbReference>
<protein>
    <recommendedName>
        <fullName evidence="1">L-seryl-tRNA(Sec) selenium transferase</fullName>
        <ecNumber evidence="1">2.9.1.1</ecNumber>
    </recommendedName>
    <alternativeName>
        <fullName evidence="1">Selenocysteine synthase</fullName>
        <shortName evidence="1">Sec synthase</shortName>
    </alternativeName>
    <alternativeName>
        <fullName evidence="1">Selenocysteinyl-tRNA(Sec) synthase</fullName>
    </alternativeName>
</protein>
<comment type="function">
    <text evidence="1">Converts seryl-tRNA(Sec) to selenocysteinyl-tRNA(Sec) required for selenoprotein biosynthesis.</text>
</comment>
<comment type="catalytic activity">
    <reaction evidence="1">
        <text>L-seryl-tRNA(Sec) + selenophosphate + H(+) = L-selenocysteinyl-tRNA(Sec) + phosphate</text>
        <dbReference type="Rhea" id="RHEA:22728"/>
        <dbReference type="Rhea" id="RHEA-COMP:9742"/>
        <dbReference type="Rhea" id="RHEA-COMP:9743"/>
        <dbReference type="ChEBI" id="CHEBI:15378"/>
        <dbReference type="ChEBI" id="CHEBI:16144"/>
        <dbReference type="ChEBI" id="CHEBI:43474"/>
        <dbReference type="ChEBI" id="CHEBI:78533"/>
        <dbReference type="ChEBI" id="CHEBI:78573"/>
        <dbReference type="EC" id="2.9.1.1"/>
    </reaction>
</comment>
<comment type="cofactor">
    <cofactor evidence="1">
        <name>pyridoxal 5'-phosphate</name>
        <dbReference type="ChEBI" id="CHEBI:597326"/>
    </cofactor>
</comment>
<comment type="pathway">
    <text evidence="1">Aminoacyl-tRNA biosynthesis; selenocysteinyl-tRNA(Sec) biosynthesis; selenocysteinyl-tRNA(Sec) from L-seryl-tRNA(Sec) (bacterial route): step 1/1.</text>
</comment>
<comment type="subcellular location">
    <subcellularLocation>
        <location evidence="1">Cytoplasm</location>
    </subcellularLocation>
</comment>
<comment type="similarity">
    <text evidence="1">Belongs to the SelA family.</text>
</comment>
<feature type="chain" id="PRO_1000124145" description="L-seryl-tRNA(Sec) selenium transferase">
    <location>
        <begin position="1"/>
        <end position="390"/>
    </location>
</feature>
<feature type="modified residue" description="N6-(pyridoxal phosphate)lysine" evidence="1">
    <location>
        <position position="225"/>
    </location>
</feature>
<organism>
    <name type="scientific">Helicobacter pylori (strain P12)</name>
    <dbReference type="NCBI Taxonomy" id="570508"/>
    <lineage>
        <taxon>Bacteria</taxon>
        <taxon>Pseudomonadati</taxon>
        <taxon>Campylobacterota</taxon>
        <taxon>Epsilonproteobacteria</taxon>
        <taxon>Campylobacterales</taxon>
        <taxon>Helicobacteraceae</taxon>
        <taxon>Helicobacter</taxon>
    </lineage>
</organism>
<proteinExistence type="inferred from homology"/>
<reference key="1">
    <citation type="submission" date="2008-10" db="EMBL/GenBank/DDBJ databases">
        <title>The complete genome sequence of Helicobacter pylori strain P12.</title>
        <authorList>
            <person name="Fischer W."/>
            <person name="Windhager L."/>
            <person name="Karnholz A."/>
            <person name="Zeiller M."/>
            <person name="Zimmer R."/>
            <person name="Haas R."/>
        </authorList>
    </citation>
    <scope>NUCLEOTIDE SEQUENCE [LARGE SCALE GENOMIC DNA]</scope>
    <source>
        <strain>P12</strain>
    </source>
</reference>
<evidence type="ECO:0000255" key="1">
    <source>
        <dbReference type="HAMAP-Rule" id="MF_00423"/>
    </source>
</evidence>
<keyword id="KW-0963">Cytoplasm</keyword>
<keyword id="KW-0648">Protein biosynthesis</keyword>
<keyword id="KW-0663">Pyridoxal phosphate</keyword>
<keyword id="KW-0711">Selenium</keyword>
<keyword id="KW-0808">Transferase</keyword>
<accession>B6JP11</accession>